<evidence type="ECO:0000250" key="1"/>
<evidence type="ECO:0000250" key="2">
    <source>
        <dbReference type="UniProtKB" id="Q6PIW4"/>
    </source>
</evidence>
<evidence type="ECO:0000256" key="3">
    <source>
        <dbReference type="SAM" id="MobiDB-lite"/>
    </source>
</evidence>
<evidence type="ECO:0000305" key="4"/>
<organism>
    <name type="scientific">Caenorhabditis briggsae</name>
    <dbReference type="NCBI Taxonomy" id="6238"/>
    <lineage>
        <taxon>Eukaryota</taxon>
        <taxon>Metazoa</taxon>
        <taxon>Ecdysozoa</taxon>
        <taxon>Nematoda</taxon>
        <taxon>Chromadorea</taxon>
        <taxon>Rhabditida</taxon>
        <taxon>Rhabditina</taxon>
        <taxon>Rhabditomorpha</taxon>
        <taxon>Rhabditoidea</taxon>
        <taxon>Rhabditidae</taxon>
        <taxon>Peloderinae</taxon>
        <taxon>Caenorhabditis</taxon>
    </lineage>
</organism>
<dbReference type="EC" id="3.6.4.-"/>
<dbReference type="EMBL" id="HE601531">
    <property type="protein sequence ID" value="CAP38575.1"/>
    <property type="molecule type" value="Genomic_DNA"/>
</dbReference>
<dbReference type="SMR" id="Q60QD1"/>
<dbReference type="FunCoup" id="Q60QD1">
    <property type="interactions" value="2504"/>
</dbReference>
<dbReference type="STRING" id="6238.Q60QD1"/>
<dbReference type="EnsemblMetazoa" id="CBG21866a.1">
    <property type="protein sequence ID" value="CBG21866a.1"/>
    <property type="gene ID" value="WBGene00040545"/>
</dbReference>
<dbReference type="KEGG" id="cbr:CBG_21866"/>
<dbReference type="CTD" id="8577664"/>
<dbReference type="WormBase" id="CBG21866a">
    <property type="protein sequence ID" value="CBP20245"/>
    <property type="gene ID" value="WBGene00040545"/>
    <property type="gene designation" value="Cbr-figl-1"/>
</dbReference>
<dbReference type="eggNOG" id="KOG0740">
    <property type="taxonomic scope" value="Eukaryota"/>
</dbReference>
<dbReference type="HOGENOM" id="CLU_032424_0_0_1"/>
<dbReference type="InParanoid" id="Q60QD1"/>
<dbReference type="OMA" id="PFTMRGF"/>
<dbReference type="Proteomes" id="UP000008549">
    <property type="component" value="Unassembled WGS sequence"/>
</dbReference>
<dbReference type="GO" id="GO:0005634">
    <property type="term" value="C:nucleus"/>
    <property type="evidence" value="ECO:0007669"/>
    <property type="project" value="UniProtKB-SubCell"/>
</dbReference>
<dbReference type="GO" id="GO:0005524">
    <property type="term" value="F:ATP binding"/>
    <property type="evidence" value="ECO:0007669"/>
    <property type="project" value="UniProtKB-KW"/>
</dbReference>
<dbReference type="GO" id="GO:0016887">
    <property type="term" value="F:ATP hydrolysis activity"/>
    <property type="evidence" value="ECO:0000318"/>
    <property type="project" value="GO_Central"/>
</dbReference>
<dbReference type="GO" id="GO:0016787">
    <property type="term" value="F:hydrolase activity"/>
    <property type="evidence" value="ECO:0000250"/>
    <property type="project" value="UniProtKB"/>
</dbReference>
<dbReference type="GO" id="GO:0000287">
    <property type="term" value="F:magnesium ion binding"/>
    <property type="evidence" value="ECO:0000250"/>
    <property type="project" value="UniProtKB"/>
</dbReference>
<dbReference type="GO" id="GO:0008017">
    <property type="term" value="F:microtubule binding"/>
    <property type="evidence" value="ECO:0007669"/>
    <property type="project" value="EnsemblMetazoa"/>
</dbReference>
<dbReference type="GO" id="GO:0008568">
    <property type="term" value="F:microtubule severing ATPase activity"/>
    <property type="evidence" value="ECO:0000318"/>
    <property type="project" value="GO_Central"/>
</dbReference>
<dbReference type="GO" id="GO:0046034">
    <property type="term" value="P:ATP metabolic process"/>
    <property type="evidence" value="ECO:0000250"/>
    <property type="project" value="UniProtKB"/>
</dbReference>
<dbReference type="GO" id="GO:0051301">
    <property type="term" value="P:cell division"/>
    <property type="evidence" value="ECO:0007669"/>
    <property type="project" value="UniProtKB-KW"/>
</dbReference>
<dbReference type="GO" id="GO:0045931">
    <property type="term" value="P:positive regulation of mitotic cell cycle"/>
    <property type="evidence" value="ECO:0007669"/>
    <property type="project" value="EnsemblMetazoa"/>
</dbReference>
<dbReference type="CDD" id="cd19525">
    <property type="entry name" value="RecA-like_Figl-1"/>
    <property type="match status" value="1"/>
</dbReference>
<dbReference type="FunFam" id="1.10.8.60:FF:000022">
    <property type="entry name" value="Fidgetin like 1"/>
    <property type="match status" value="1"/>
</dbReference>
<dbReference type="FunFam" id="3.40.50.300:FF:000093">
    <property type="entry name" value="Fidgetin-like 1"/>
    <property type="match status" value="1"/>
</dbReference>
<dbReference type="Gene3D" id="1.10.8.60">
    <property type="match status" value="1"/>
</dbReference>
<dbReference type="Gene3D" id="3.40.50.300">
    <property type="entry name" value="P-loop containing nucleotide triphosphate hydrolases"/>
    <property type="match status" value="1"/>
</dbReference>
<dbReference type="InterPro" id="IPR003593">
    <property type="entry name" value="AAA+_ATPase"/>
</dbReference>
<dbReference type="InterPro" id="IPR041569">
    <property type="entry name" value="AAA_lid_3"/>
</dbReference>
<dbReference type="InterPro" id="IPR003959">
    <property type="entry name" value="ATPase_AAA_core"/>
</dbReference>
<dbReference type="InterPro" id="IPR003960">
    <property type="entry name" value="ATPase_AAA_CS"/>
</dbReference>
<dbReference type="InterPro" id="IPR047858">
    <property type="entry name" value="FIGNL1_ATPase"/>
</dbReference>
<dbReference type="InterPro" id="IPR050304">
    <property type="entry name" value="MT-severing_AAA_ATPase"/>
</dbReference>
<dbReference type="InterPro" id="IPR027417">
    <property type="entry name" value="P-loop_NTPase"/>
</dbReference>
<dbReference type="InterPro" id="IPR015415">
    <property type="entry name" value="Spast_Vps4_C"/>
</dbReference>
<dbReference type="PANTHER" id="PTHR23074">
    <property type="entry name" value="AAA DOMAIN-CONTAINING"/>
    <property type="match status" value="1"/>
</dbReference>
<dbReference type="PANTHER" id="PTHR23074:SF17">
    <property type="entry name" value="FIDGETIN-LIKE PROTEIN 1"/>
    <property type="match status" value="1"/>
</dbReference>
<dbReference type="Pfam" id="PF00004">
    <property type="entry name" value="AAA"/>
    <property type="match status" value="1"/>
</dbReference>
<dbReference type="Pfam" id="PF17862">
    <property type="entry name" value="AAA_lid_3"/>
    <property type="match status" value="1"/>
</dbReference>
<dbReference type="Pfam" id="PF09336">
    <property type="entry name" value="Vps4_C"/>
    <property type="match status" value="1"/>
</dbReference>
<dbReference type="SMART" id="SM00382">
    <property type="entry name" value="AAA"/>
    <property type="match status" value="1"/>
</dbReference>
<dbReference type="SUPFAM" id="SSF52540">
    <property type="entry name" value="P-loop containing nucleoside triphosphate hydrolases"/>
    <property type="match status" value="1"/>
</dbReference>
<dbReference type="PROSITE" id="PS00674">
    <property type="entry name" value="AAA"/>
    <property type="match status" value="1"/>
</dbReference>
<gene>
    <name type="primary">figl-1</name>
    <name type="ORF">CBG21866</name>
</gene>
<accession>Q60QD1</accession>
<accession>A8Y106</accession>
<comment type="function">
    <text evidence="1">Has a role in spindle assembly which acts in the progression through mitosis during embryogenesis. Required for fertility (By similarity).</text>
</comment>
<comment type="catalytic activity">
    <reaction>
        <text>ATP + H2O = ADP + phosphate + H(+)</text>
        <dbReference type="Rhea" id="RHEA:13065"/>
        <dbReference type="ChEBI" id="CHEBI:15377"/>
        <dbReference type="ChEBI" id="CHEBI:15378"/>
        <dbReference type="ChEBI" id="CHEBI:30616"/>
        <dbReference type="ChEBI" id="CHEBI:43474"/>
        <dbReference type="ChEBI" id="CHEBI:456216"/>
    </reaction>
</comment>
<comment type="cofactor">
    <cofactor evidence="1">
        <name>Mg(2+)</name>
        <dbReference type="ChEBI" id="CHEBI:18420"/>
    </cofactor>
</comment>
<comment type="subunit">
    <text evidence="1">Hexamer.</text>
</comment>
<comment type="subcellular location">
    <subcellularLocation>
        <location evidence="1">Nucleus</location>
    </subcellularLocation>
</comment>
<comment type="similarity">
    <text evidence="4">Belongs to the AAA ATPase family.</text>
</comment>
<proteinExistence type="inferred from homology"/>
<name>FIGL1_CAEBR</name>
<protein>
    <recommendedName>
        <fullName>Fidgetin-like protein 1</fullName>
        <ecNumber>3.6.4.-</ecNumber>
    </recommendedName>
</protein>
<keyword id="KW-0067">ATP-binding</keyword>
<keyword id="KW-0131">Cell cycle</keyword>
<keyword id="KW-0132">Cell division</keyword>
<keyword id="KW-0378">Hydrolase</keyword>
<keyword id="KW-0460">Magnesium</keyword>
<keyword id="KW-0479">Metal-binding</keyword>
<keyword id="KW-0498">Mitosis</keyword>
<keyword id="KW-0547">Nucleotide-binding</keyword>
<keyword id="KW-0539">Nucleus</keyword>
<keyword id="KW-1185">Reference proteome</keyword>
<reference key="1">
    <citation type="journal article" date="2003" name="PLoS Biol.">
        <title>The genome sequence of Caenorhabditis briggsae: a platform for comparative genomics.</title>
        <authorList>
            <person name="Stein L.D."/>
            <person name="Bao Z."/>
            <person name="Blasiar D."/>
            <person name="Blumenthal T."/>
            <person name="Brent M.R."/>
            <person name="Chen N."/>
            <person name="Chinwalla A."/>
            <person name="Clarke L."/>
            <person name="Clee C."/>
            <person name="Coghlan A."/>
            <person name="Coulson A."/>
            <person name="D'Eustachio P."/>
            <person name="Fitch D.H.A."/>
            <person name="Fulton L.A."/>
            <person name="Fulton R.E."/>
            <person name="Griffiths-Jones S."/>
            <person name="Harris T.W."/>
            <person name="Hillier L.W."/>
            <person name="Kamath R."/>
            <person name="Kuwabara P.E."/>
            <person name="Mardis E.R."/>
            <person name="Marra M.A."/>
            <person name="Miner T.L."/>
            <person name="Minx P."/>
            <person name="Mullikin J.C."/>
            <person name="Plumb R.W."/>
            <person name="Rogers J."/>
            <person name="Schein J.E."/>
            <person name="Sohrmann M."/>
            <person name="Spieth J."/>
            <person name="Stajich J.E."/>
            <person name="Wei C."/>
            <person name="Willey D."/>
            <person name="Wilson R.K."/>
            <person name="Durbin R.M."/>
            <person name="Waterston R.H."/>
        </authorList>
    </citation>
    <scope>NUCLEOTIDE SEQUENCE [LARGE SCALE GENOMIC DNA]</scope>
    <source>
        <strain>AF16</strain>
    </source>
</reference>
<sequence length="591" mass="65913">MYSPKRVKLNLTNGMRKRPETEENRGELYPPTAMARNGISPYFIGKPRRKIVGDHKASEAGPPPPFPLKPKRKEPDDDPESIVIDEDDEEDEPAPQVEKREPKKTHNRPFFGEKSSLTATELETAKKEEVVKKKDPFTMRGFDFGSDEKVVKIRDKICDIVDPTGARRSDPAFIQQMHSNTLKGIEVATNPKFKQKRTANNKNRAAIGSTLGTIYPNFLTASGQEPQKSKFQIPLDRQSSSQSNHSQPIRKTLPEIPRRCSNSLVKKAMGMDTDGGGKDERMDGLRSEPTLKHFDENIISLIESEIMSVNNQIGWADVAGLEGAKKALKEIVVLPFQRPDIFTGLRAPPKGVLLFGPPGTGKTMIGRCVASQAQATFFNISASSLTSKWVGEGEKLVRALFSVARLKLPSVIFIDEIDSLLSARSESEHESSRRIKTEFLVQLDGVNTAPDERLLVLGATNRPQELDEAARRRFQKRLYIALPEPDSRTQIVENLLRGTRHEITDHNLEKIRRLTDGYSGADMRQLCTEAAMGPIREIGDQIATINKDDIRAVTVADFTEAARVVRPTVDDSQLDAYAAWDKKFGCLPPPL</sequence>
<feature type="chain" id="PRO_0000302728" description="Fidgetin-like protein 1">
    <location>
        <begin position="1"/>
        <end position="591"/>
    </location>
</feature>
<feature type="region of interest" description="Disordered" evidence="3">
    <location>
        <begin position="1"/>
        <end position="117"/>
    </location>
</feature>
<feature type="region of interest" description="Disordered" evidence="3">
    <location>
        <begin position="223"/>
        <end position="249"/>
    </location>
</feature>
<feature type="compositionally biased region" description="Basic and acidic residues" evidence="3">
    <location>
        <begin position="17"/>
        <end position="26"/>
    </location>
</feature>
<feature type="compositionally biased region" description="Acidic residues" evidence="3">
    <location>
        <begin position="76"/>
        <end position="93"/>
    </location>
</feature>
<feature type="compositionally biased region" description="Polar residues" evidence="3">
    <location>
        <begin position="237"/>
        <end position="249"/>
    </location>
</feature>
<feature type="binding site" evidence="2">
    <location>
        <position position="319"/>
    </location>
    <ligand>
        <name>ATP</name>
        <dbReference type="ChEBI" id="CHEBI:30616"/>
    </ligand>
</feature>
<feature type="binding site" evidence="2">
    <location>
        <begin position="359"/>
        <end position="364"/>
    </location>
    <ligand>
        <name>ATP</name>
        <dbReference type="ChEBI" id="CHEBI:30616"/>
    </ligand>
</feature>